<sequence length="157" mass="17720">MSKVKNIAVVAHDNCKKELLDFVDCNHNILSRHNLVATGTTGGLVEKMIMERVEQKADEGYEFKPVNRMKSGPLGGDQQLGAMISEGKIDVLIFFWDPMQPQPHDVDVKALLRLAVLYNIPTASNRSTAEFLISSPFFEGEFQRKETDFSSYTQRKL</sequence>
<evidence type="ECO:0000255" key="1">
    <source>
        <dbReference type="HAMAP-Rule" id="MF_00549"/>
    </source>
</evidence>
<name>MGSA_MARSD</name>
<dbReference type="EC" id="4.2.3.3" evidence="1"/>
<dbReference type="EMBL" id="CP001649">
    <property type="protein sequence ID" value="ACS78961.1"/>
    <property type="molecule type" value="Genomic_DNA"/>
</dbReference>
<dbReference type="RefSeq" id="WP_015850780.1">
    <property type="nucleotide sequence ID" value="NC_012881.1"/>
</dbReference>
<dbReference type="SMR" id="C6BZQ4"/>
<dbReference type="STRING" id="526222.Desal_0896"/>
<dbReference type="KEGG" id="dsa:Desal_0896"/>
<dbReference type="eggNOG" id="COG1803">
    <property type="taxonomic scope" value="Bacteria"/>
</dbReference>
<dbReference type="HOGENOM" id="CLU_120420_1_0_7"/>
<dbReference type="OrthoDB" id="9787147at2"/>
<dbReference type="Proteomes" id="UP000002601">
    <property type="component" value="Chromosome"/>
</dbReference>
<dbReference type="GO" id="GO:0005829">
    <property type="term" value="C:cytosol"/>
    <property type="evidence" value="ECO:0007669"/>
    <property type="project" value="TreeGrafter"/>
</dbReference>
<dbReference type="GO" id="GO:0008929">
    <property type="term" value="F:methylglyoxal synthase activity"/>
    <property type="evidence" value="ECO:0007669"/>
    <property type="project" value="UniProtKB-UniRule"/>
</dbReference>
<dbReference type="GO" id="GO:0019242">
    <property type="term" value="P:methylglyoxal biosynthetic process"/>
    <property type="evidence" value="ECO:0007669"/>
    <property type="project" value="UniProtKB-UniRule"/>
</dbReference>
<dbReference type="CDD" id="cd01422">
    <property type="entry name" value="MGS"/>
    <property type="match status" value="1"/>
</dbReference>
<dbReference type="Gene3D" id="3.40.50.1380">
    <property type="entry name" value="Methylglyoxal synthase-like domain"/>
    <property type="match status" value="1"/>
</dbReference>
<dbReference type="HAMAP" id="MF_00549">
    <property type="entry name" value="Methylglyoxal_synth"/>
    <property type="match status" value="1"/>
</dbReference>
<dbReference type="InterPro" id="IPR004363">
    <property type="entry name" value="Methylgl_synth"/>
</dbReference>
<dbReference type="InterPro" id="IPR018148">
    <property type="entry name" value="Methylglyoxal_synth_AS"/>
</dbReference>
<dbReference type="InterPro" id="IPR011607">
    <property type="entry name" value="MGS-like_dom"/>
</dbReference>
<dbReference type="InterPro" id="IPR036914">
    <property type="entry name" value="MGS-like_dom_sf"/>
</dbReference>
<dbReference type="NCBIfam" id="TIGR00160">
    <property type="entry name" value="MGSA"/>
    <property type="match status" value="1"/>
</dbReference>
<dbReference type="NCBIfam" id="NF003559">
    <property type="entry name" value="PRK05234.1"/>
    <property type="match status" value="1"/>
</dbReference>
<dbReference type="PANTHER" id="PTHR30492">
    <property type="entry name" value="METHYLGLYOXAL SYNTHASE"/>
    <property type="match status" value="1"/>
</dbReference>
<dbReference type="PANTHER" id="PTHR30492:SF0">
    <property type="entry name" value="METHYLGLYOXAL SYNTHASE"/>
    <property type="match status" value="1"/>
</dbReference>
<dbReference type="Pfam" id="PF02142">
    <property type="entry name" value="MGS"/>
    <property type="match status" value="1"/>
</dbReference>
<dbReference type="PIRSF" id="PIRSF006614">
    <property type="entry name" value="Methylglyox_syn"/>
    <property type="match status" value="1"/>
</dbReference>
<dbReference type="SMART" id="SM00851">
    <property type="entry name" value="MGS"/>
    <property type="match status" value="1"/>
</dbReference>
<dbReference type="SUPFAM" id="SSF52335">
    <property type="entry name" value="Methylglyoxal synthase-like"/>
    <property type="match status" value="1"/>
</dbReference>
<dbReference type="PROSITE" id="PS01335">
    <property type="entry name" value="METHYLGLYOXAL_SYNTH"/>
    <property type="match status" value="1"/>
</dbReference>
<dbReference type="PROSITE" id="PS51855">
    <property type="entry name" value="MGS"/>
    <property type="match status" value="1"/>
</dbReference>
<gene>
    <name evidence="1" type="primary">mgsA</name>
    <name type="ordered locus">Desal_0896</name>
</gene>
<keyword id="KW-0456">Lyase</keyword>
<keyword id="KW-1185">Reference proteome</keyword>
<organism>
    <name type="scientific">Maridesulfovibrio salexigens (strain ATCC 14822 / DSM 2638 / NCIMB 8403 / VKM B-1763)</name>
    <name type="common">Desulfovibrio salexigens</name>
    <dbReference type="NCBI Taxonomy" id="526222"/>
    <lineage>
        <taxon>Bacteria</taxon>
        <taxon>Pseudomonadati</taxon>
        <taxon>Thermodesulfobacteriota</taxon>
        <taxon>Desulfovibrionia</taxon>
        <taxon>Desulfovibrionales</taxon>
        <taxon>Desulfovibrionaceae</taxon>
        <taxon>Maridesulfovibrio</taxon>
    </lineage>
</organism>
<comment type="function">
    <text evidence="1">Catalyzes the formation of methylglyoxal from dihydroxyacetone phosphate.</text>
</comment>
<comment type="catalytic activity">
    <reaction evidence="1">
        <text>dihydroxyacetone phosphate = methylglyoxal + phosphate</text>
        <dbReference type="Rhea" id="RHEA:17937"/>
        <dbReference type="ChEBI" id="CHEBI:17158"/>
        <dbReference type="ChEBI" id="CHEBI:43474"/>
        <dbReference type="ChEBI" id="CHEBI:57642"/>
        <dbReference type="EC" id="4.2.3.3"/>
    </reaction>
</comment>
<comment type="similarity">
    <text evidence="1">Belongs to the methylglyoxal synthase family.</text>
</comment>
<proteinExistence type="inferred from homology"/>
<feature type="chain" id="PRO_1000211980" description="Methylglyoxal synthase">
    <location>
        <begin position="1"/>
        <end position="157"/>
    </location>
</feature>
<feature type="domain" description="MGS-like" evidence="1">
    <location>
        <begin position="1"/>
        <end position="157"/>
    </location>
</feature>
<feature type="active site" description="Proton donor/acceptor" evidence="1">
    <location>
        <position position="77"/>
    </location>
</feature>
<feature type="binding site" evidence="1">
    <location>
        <position position="12"/>
    </location>
    <ligand>
        <name>substrate</name>
    </ligand>
</feature>
<feature type="binding site" evidence="1">
    <location>
        <position position="16"/>
    </location>
    <ligand>
        <name>substrate</name>
    </ligand>
</feature>
<feature type="binding site" evidence="1">
    <location>
        <begin position="38"/>
        <end position="41"/>
    </location>
    <ligand>
        <name>substrate</name>
    </ligand>
</feature>
<feature type="binding site" evidence="1">
    <location>
        <begin position="71"/>
        <end position="72"/>
    </location>
    <ligand>
        <name>substrate</name>
    </ligand>
</feature>
<feature type="binding site" evidence="1">
    <location>
        <position position="104"/>
    </location>
    <ligand>
        <name>substrate</name>
    </ligand>
</feature>
<accession>C6BZQ4</accession>
<protein>
    <recommendedName>
        <fullName evidence="1">Methylglyoxal synthase</fullName>
        <shortName evidence="1">MGS</shortName>
        <ecNumber evidence="1">4.2.3.3</ecNumber>
    </recommendedName>
</protein>
<reference key="1">
    <citation type="submission" date="2009-06" db="EMBL/GenBank/DDBJ databases">
        <title>Complete sequence of Desulfovibrio salexigens DSM 2638.</title>
        <authorList>
            <consortium name="US DOE Joint Genome Institute"/>
            <person name="Lucas S."/>
            <person name="Copeland A."/>
            <person name="Lapidus A."/>
            <person name="Glavina del Rio T."/>
            <person name="Tice H."/>
            <person name="Bruce D."/>
            <person name="Goodwin L."/>
            <person name="Pitluck S."/>
            <person name="Munk A.C."/>
            <person name="Brettin T."/>
            <person name="Detter J.C."/>
            <person name="Han C."/>
            <person name="Tapia R."/>
            <person name="Larimer F."/>
            <person name="Land M."/>
            <person name="Hauser L."/>
            <person name="Kyrpides N."/>
            <person name="Anderson I."/>
            <person name="Wall J.D."/>
            <person name="Arkin A.P."/>
            <person name="Dehal P."/>
            <person name="Chivian D."/>
            <person name="Giles B."/>
            <person name="Hazen T.C."/>
        </authorList>
    </citation>
    <scope>NUCLEOTIDE SEQUENCE [LARGE SCALE GENOMIC DNA]</scope>
    <source>
        <strain>ATCC 14822 / DSM 2638 / NCIMB 8403 / VKM B-1763</strain>
    </source>
</reference>